<proteinExistence type="inferred from homology"/>
<feature type="chain" id="PRO_0000255548" description="Small ribosomal subunit protein uS15">
    <location>
        <begin position="1"/>
        <end position="86"/>
    </location>
</feature>
<feature type="region of interest" description="Disordered" evidence="2">
    <location>
        <begin position="1"/>
        <end position="22"/>
    </location>
</feature>
<feature type="compositionally biased region" description="Basic and acidic residues" evidence="2">
    <location>
        <begin position="7"/>
        <end position="16"/>
    </location>
</feature>
<reference key="1">
    <citation type="journal article" date="2005" name="Jpn. Agric. Res. Q.">
        <title>Genome sequence of Xanthomonas oryzae pv. oryzae suggests contribution of large numbers of effector genes and insertion sequences to its race diversity.</title>
        <authorList>
            <person name="Ochiai H."/>
            <person name="Inoue Y."/>
            <person name="Takeya M."/>
            <person name="Sasaki A."/>
            <person name="Kaku H."/>
        </authorList>
    </citation>
    <scope>NUCLEOTIDE SEQUENCE [LARGE SCALE GENOMIC DNA]</scope>
    <source>
        <strain>MAFF 311018</strain>
    </source>
</reference>
<gene>
    <name evidence="1" type="primary">rpsO</name>
    <name type="ordered locus">XOO3048</name>
</gene>
<keyword id="KW-0687">Ribonucleoprotein</keyword>
<keyword id="KW-0689">Ribosomal protein</keyword>
<keyword id="KW-0694">RNA-binding</keyword>
<keyword id="KW-0699">rRNA-binding</keyword>
<comment type="function">
    <text evidence="1">One of the primary rRNA binding proteins, it binds directly to 16S rRNA where it helps nucleate assembly of the platform of the 30S subunit by binding and bridging several RNA helices of the 16S rRNA.</text>
</comment>
<comment type="function">
    <text evidence="1">Forms an intersubunit bridge (bridge B4) with the 23S rRNA of the 50S subunit in the ribosome.</text>
</comment>
<comment type="subunit">
    <text evidence="1">Part of the 30S ribosomal subunit. Forms a bridge to the 50S subunit in the 70S ribosome, contacting the 23S rRNA.</text>
</comment>
<comment type="similarity">
    <text evidence="1">Belongs to the universal ribosomal protein uS15 family.</text>
</comment>
<dbReference type="EMBL" id="AP008229">
    <property type="protein sequence ID" value="BAE69803.1"/>
    <property type="molecule type" value="Genomic_DNA"/>
</dbReference>
<dbReference type="RefSeq" id="WP_003485583.1">
    <property type="nucleotide sequence ID" value="NC_007705.1"/>
</dbReference>
<dbReference type="SMR" id="Q2P0X4"/>
<dbReference type="GeneID" id="97510971"/>
<dbReference type="KEGG" id="xom:XOO3048"/>
<dbReference type="HOGENOM" id="CLU_148518_1_0_6"/>
<dbReference type="GO" id="GO:0022627">
    <property type="term" value="C:cytosolic small ribosomal subunit"/>
    <property type="evidence" value="ECO:0007669"/>
    <property type="project" value="TreeGrafter"/>
</dbReference>
<dbReference type="GO" id="GO:0019843">
    <property type="term" value="F:rRNA binding"/>
    <property type="evidence" value="ECO:0007669"/>
    <property type="project" value="UniProtKB-UniRule"/>
</dbReference>
<dbReference type="GO" id="GO:0003735">
    <property type="term" value="F:structural constituent of ribosome"/>
    <property type="evidence" value="ECO:0007669"/>
    <property type="project" value="InterPro"/>
</dbReference>
<dbReference type="GO" id="GO:0006412">
    <property type="term" value="P:translation"/>
    <property type="evidence" value="ECO:0007669"/>
    <property type="project" value="UniProtKB-UniRule"/>
</dbReference>
<dbReference type="CDD" id="cd00353">
    <property type="entry name" value="Ribosomal_S15p_S13e"/>
    <property type="match status" value="1"/>
</dbReference>
<dbReference type="FunFam" id="1.10.287.10:FF:000002">
    <property type="entry name" value="30S ribosomal protein S15"/>
    <property type="match status" value="1"/>
</dbReference>
<dbReference type="Gene3D" id="6.10.250.3130">
    <property type="match status" value="1"/>
</dbReference>
<dbReference type="Gene3D" id="1.10.287.10">
    <property type="entry name" value="S15/NS1, RNA-binding"/>
    <property type="match status" value="1"/>
</dbReference>
<dbReference type="HAMAP" id="MF_01343_B">
    <property type="entry name" value="Ribosomal_uS15_B"/>
    <property type="match status" value="1"/>
</dbReference>
<dbReference type="InterPro" id="IPR000589">
    <property type="entry name" value="Ribosomal_uS15"/>
</dbReference>
<dbReference type="InterPro" id="IPR005290">
    <property type="entry name" value="Ribosomal_uS15_bac-type"/>
</dbReference>
<dbReference type="InterPro" id="IPR009068">
    <property type="entry name" value="uS15_NS1_RNA-bd_sf"/>
</dbReference>
<dbReference type="NCBIfam" id="TIGR00952">
    <property type="entry name" value="S15_bact"/>
    <property type="match status" value="1"/>
</dbReference>
<dbReference type="PANTHER" id="PTHR23321">
    <property type="entry name" value="RIBOSOMAL PROTEIN S15, BACTERIAL AND ORGANELLAR"/>
    <property type="match status" value="1"/>
</dbReference>
<dbReference type="PANTHER" id="PTHR23321:SF26">
    <property type="entry name" value="SMALL RIBOSOMAL SUBUNIT PROTEIN US15M"/>
    <property type="match status" value="1"/>
</dbReference>
<dbReference type="Pfam" id="PF00312">
    <property type="entry name" value="Ribosomal_S15"/>
    <property type="match status" value="1"/>
</dbReference>
<dbReference type="SMART" id="SM01387">
    <property type="entry name" value="Ribosomal_S15"/>
    <property type="match status" value="1"/>
</dbReference>
<dbReference type="SUPFAM" id="SSF47060">
    <property type="entry name" value="S15/NS1 RNA-binding domain"/>
    <property type="match status" value="1"/>
</dbReference>
<dbReference type="PROSITE" id="PS00362">
    <property type="entry name" value="RIBOSOMAL_S15"/>
    <property type="match status" value="1"/>
</dbReference>
<accession>Q2P0X4</accession>
<evidence type="ECO:0000255" key="1">
    <source>
        <dbReference type="HAMAP-Rule" id="MF_01343"/>
    </source>
</evidence>
<evidence type="ECO:0000256" key="2">
    <source>
        <dbReference type="SAM" id="MobiDB-lite"/>
    </source>
</evidence>
<evidence type="ECO:0000305" key="3"/>
<organism>
    <name type="scientific">Xanthomonas oryzae pv. oryzae (strain MAFF 311018)</name>
    <dbReference type="NCBI Taxonomy" id="342109"/>
    <lineage>
        <taxon>Bacteria</taxon>
        <taxon>Pseudomonadati</taxon>
        <taxon>Pseudomonadota</taxon>
        <taxon>Gammaproteobacteria</taxon>
        <taxon>Lysobacterales</taxon>
        <taxon>Lysobacteraceae</taxon>
        <taxon>Xanthomonas</taxon>
    </lineage>
</organism>
<name>RS15_XANOM</name>
<protein>
    <recommendedName>
        <fullName evidence="1">Small ribosomal subunit protein uS15</fullName>
    </recommendedName>
    <alternativeName>
        <fullName evidence="3">30S ribosomal protein S15</fullName>
    </alternativeName>
</protein>
<sequence>MSVDTQKVIEDNKRSAQDTGSPEVQVALLTARIELLTGHFKTHKKDHHSRRGLLQMVNRRRSLLDYLKKKDNERYKSLIEKLGLRR</sequence>